<comment type="function">
    <text evidence="1">This protein is not toxic. It induces an immune response similar to that induced by whole venom. Thus, polyclonal antibodies raised against this protein can neutralize the effects of the venom (By similarity).</text>
</comment>
<comment type="subcellular location">
    <subcellularLocation>
        <location>Secreted</location>
    </subcellularLocation>
</comment>
<comment type="tissue specificity">
    <text>Expressed by the venom gland.</text>
</comment>
<comment type="domain">
    <text evidence="4">Has the structural arrangement of an alpha-helix connected to antiparallel beta-sheets by disulfide bonds (CS-alpha/beta).</text>
</comment>
<comment type="mass spectrometry" mass="6566.0" method="Electrospray" evidence="3"/>
<comment type="similarity">
    <text evidence="4">Belongs to the long (4 C-C) scorpion toxin superfamily. Sodium channel inhibitor family. Alpha subfamily.</text>
</comment>
<keyword id="KW-0027">Amidation</keyword>
<keyword id="KW-0903">Direct protein sequencing</keyword>
<keyword id="KW-1015">Disulfide bond</keyword>
<keyword id="KW-0964">Secreted</keyword>
<keyword id="KW-0732">Signal</keyword>
<sequence length="84" mass="9036">MKRMILFTSCLLLIDIVVGGKEGYPADSKGCKVTCFLTAAGYCNTECKLQKASSGYCAWPACYCYGLPDSASVWDSATNKCGKK</sequence>
<proteinExistence type="evidence at protein level"/>
<dbReference type="EMBL" id="AY740693">
    <property type="protein sequence ID" value="AAW72463.1"/>
    <property type="molecule type" value="mRNA"/>
</dbReference>
<dbReference type="SMR" id="Q5G8A8"/>
<dbReference type="GO" id="GO:0005576">
    <property type="term" value="C:extracellular region"/>
    <property type="evidence" value="ECO:0007669"/>
    <property type="project" value="UniProtKB-SubCell"/>
</dbReference>
<dbReference type="GO" id="GO:0019871">
    <property type="term" value="F:sodium channel inhibitor activity"/>
    <property type="evidence" value="ECO:0007669"/>
    <property type="project" value="InterPro"/>
</dbReference>
<dbReference type="GO" id="GO:0090729">
    <property type="term" value="F:toxin activity"/>
    <property type="evidence" value="ECO:0007669"/>
    <property type="project" value="InterPro"/>
</dbReference>
<dbReference type="GO" id="GO:0006952">
    <property type="term" value="P:defense response"/>
    <property type="evidence" value="ECO:0007669"/>
    <property type="project" value="InterPro"/>
</dbReference>
<dbReference type="CDD" id="cd23106">
    <property type="entry name" value="neurotoxins_LC_scorpion"/>
    <property type="match status" value="1"/>
</dbReference>
<dbReference type="FunFam" id="3.30.30.10:FF:000002">
    <property type="entry name" value="Alpha-like toxin BmK-M1"/>
    <property type="match status" value="1"/>
</dbReference>
<dbReference type="Gene3D" id="3.30.30.10">
    <property type="entry name" value="Knottin, scorpion toxin-like"/>
    <property type="match status" value="1"/>
</dbReference>
<dbReference type="InterPro" id="IPR044062">
    <property type="entry name" value="LCN-type_CS_alpha_beta_dom"/>
</dbReference>
<dbReference type="InterPro" id="IPR003614">
    <property type="entry name" value="Scorpion_toxin-like"/>
</dbReference>
<dbReference type="InterPro" id="IPR036574">
    <property type="entry name" value="Scorpion_toxin-like_sf"/>
</dbReference>
<dbReference type="InterPro" id="IPR018218">
    <property type="entry name" value="Scorpion_toxinL"/>
</dbReference>
<dbReference type="InterPro" id="IPR002061">
    <property type="entry name" value="Scorpion_toxinL/defensin"/>
</dbReference>
<dbReference type="Pfam" id="PF00537">
    <property type="entry name" value="Toxin_3"/>
    <property type="match status" value="1"/>
</dbReference>
<dbReference type="PRINTS" id="PR00285">
    <property type="entry name" value="SCORPNTOXIN"/>
</dbReference>
<dbReference type="SMART" id="SM00505">
    <property type="entry name" value="Knot1"/>
    <property type="match status" value="1"/>
</dbReference>
<dbReference type="SUPFAM" id="SSF57095">
    <property type="entry name" value="Scorpion toxin-like"/>
    <property type="match status" value="1"/>
</dbReference>
<dbReference type="PROSITE" id="PS51863">
    <property type="entry name" value="LCN_CSAB"/>
    <property type="match status" value="1"/>
</dbReference>
<protein>
    <recommendedName>
        <fullName>Toxin-like TcoNTxP1</fullName>
    </recommendedName>
    <alternativeName>
        <fullName>Insect-like toxic peptide Tco 38.32-2</fullName>
    </alternativeName>
    <alternativeName>
        <fullName>PT-alpha* NaTx4.5</fullName>
    </alternativeName>
</protein>
<evidence type="ECO:0000250" key="1"/>
<evidence type="ECO:0000255" key="2">
    <source>
        <dbReference type="PROSITE-ProRule" id="PRU01210"/>
    </source>
</evidence>
<evidence type="ECO:0000269" key="3">
    <source>
    </source>
</evidence>
<evidence type="ECO:0000305" key="4"/>
<evidence type="ECO:0000305" key="5">
    <source>
    </source>
</evidence>
<feature type="signal peptide" evidence="1">
    <location>
        <begin position="1"/>
        <end position="19"/>
    </location>
</feature>
<feature type="chain" id="PRO_0000231503" description="Toxin-like TcoNTxP1">
    <location>
        <begin position="20"/>
        <end position="81"/>
    </location>
</feature>
<feature type="propeptide" id="PRO_0000231504">
    <location>
        <begin position="82"/>
        <end position="84"/>
    </location>
</feature>
<feature type="domain" description="LCN-type CS-alpha/beta" evidence="2">
    <location>
        <begin position="21"/>
        <end position="82"/>
    </location>
</feature>
<feature type="modified residue" description="Cysteine amide" evidence="5">
    <location>
        <position position="81"/>
    </location>
</feature>
<feature type="disulfide bond" evidence="2">
    <location>
        <begin position="31"/>
        <end position="81"/>
    </location>
</feature>
<feature type="disulfide bond" evidence="2">
    <location>
        <begin position="35"/>
        <end position="57"/>
    </location>
</feature>
<feature type="disulfide bond" evidence="2">
    <location>
        <begin position="43"/>
        <end position="62"/>
    </location>
</feature>
<feature type="disulfide bond" evidence="2">
    <location>
        <begin position="47"/>
        <end position="64"/>
    </location>
</feature>
<reference key="1">
    <citation type="journal article" date="2005" name="Toxicon">
        <title>The Brazilian scorpion Tityus costatus Karsch: genes, peptides and function.</title>
        <authorList>
            <person name="Diego-Garcia E."/>
            <person name="Batista C.V.F."/>
            <person name="Garcia-Gomez B.I."/>
            <person name="Lucas S."/>
            <person name="Candido D.M."/>
            <person name="Gomez-Lagunas F."/>
            <person name="Possani L.D."/>
        </authorList>
    </citation>
    <scope>NUCLEOTIDE SEQUENCE [MRNA]</scope>
    <scope>AMIDATION AT CYS-81</scope>
    <scope>PROTEIN SEQUENCE OF 20-49</scope>
    <scope>MASS SPECTROMETRY</scope>
    <source>
        <tissue>Venom</tissue>
        <tissue>Venom gland</tissue>
    </source>
</reference>
<reference key="2">
    <citation type="journal article" date="2012" name="PLoS ONE">
        <title>Identification and phylogenetic analysis of Tityus pachyurus and Tityus obscurus novel putative Na+-channel scorpion toxins.</title>
        <authorList>
            <person name="Guerrero-Vargas J.A."/>
            <person name="Mourao C.B."/>
            <person name="Quintero-Hernandez V."/>
            <person name="Possani L.D."/>
            <person name="Schwartz E.F."/>
        </authorList>
    </citation>
    <scope>NOMENCLATURE</scope>
</reference>
<accession>Q5G8A8</accession>
<name>SCX38_TITCO</name>
<organism>
    <name type="scientific">Tityus costatus</name>
    <name type="common">Brazilian scorpion</name>
    <dbReference type="NCBI Taxonomy" id="309814"/>
    <lineage>
        <taxon>Eukaryota</taxon>
        <taxon>Metazoa</taxon>
        <taxon>Ecdysozoa</taxon>
        <taxon>Arthropoda</taxon>
        <taxon>Chelicerata</taxon>
        <taxon>Arachnida</taxon>
        <taxon>Scorpiones</taxon>
        <taxon>Buthida</taxon>
        <taxon>Buthoidea</taxon>
        <taxon>Buthidae</taxon>
        <taxon>Tityus</taxon>
    </lineage>
</organism>